<accession>B2I1Y7</accession>
<feature type="chain" id="PRO_1000132848" description="Large ribosomal subunit protein uL11">
    <location>
        <begin position="1"/>
        <end position="142"/>
    </location>
</feature>
<evidence type="ECO:0000255" key="1">
    <source>
        <dbReference type="HAMAP-Rule" id="MF_00736"/>
    </source>
</evidence>
<evidence type="ECO:0000305" key="2"/>
<protein>
    <recommendedName>
        <fullName evidence="1">Large ribosomal subunit protein uL11</fullName>
    </recommendedName>
    <alternativeName>
        <fullName evidence="2">50S ribosomal protein L11</fullName>
    </alternativeName>
</protein>
<name>RL11_ACIBC</name>
<organism>
    <name type="scientific">Acinetobacter baumannii (strain ACICU)</name>
    <dbReference type="NCBI Taxonomy" id="405416"/>
    <lineage>
        <taxon>Bacteria</taxon>
        <taxon>Pseudomonadati</taxon>
        <taxon>Pseudomonadota</taxon>
        <taxon>Gammaproteobacteria</taxon>
        <taxon>Moraxellales</taxon>
        <taxon>Moraxellaceae</taxon>
        <taxon>Acinetobacter</taxon>
        <taxon>Acinetobacter calcoaceticus/baumannii complex</taxon>
    </lineage>
</organism>
<gene>
    <name evidence="1" type="primary">rplK</name>
    <name type="ordered locus">ACICU_00299</name>
</gene>
<keyword id="KW-0488">Methylation</keyword>
<keyword id="KW-0687">Ribonucleoprotein</keyword>
<keyword id="KW-0689">Ribosomal protein</keyword>
<keyword id="KW-0694">RNA-binding</keyword>
<keyword id="KW-0699">rRNA-binding</keyword>
<dbReference type="EMBL" id="CP000863">
    <property type="protein sequence ID" value="ACC55611.1"/>
    <property type="molecule type" value="Genomic_DNA"/>
</dbReference>
<dbReference type="RefSeq" id="WP_001074682.1">
    <property type="nucleotide sequence ID" value="NZ_CP031380.1"/>
</dbReference>
<dbReference type="SMR" id="B2I1Y7"/>
<dbReference type="GeneID" id="9384044"/>
<dbReference type="KEGG" id="abc:ACICU_00299"/>
<dbReference type="HOGENOM" id="CLU_074237_2_1_6"/>
<dbReference type="Proteomes" id="UP000008839">
    <property type="component" value="Chromosome"/>
</dbReference>
<dbReference type="GO" id="GO:0022625">
    <property type="term" value="C:cytosolic large ribosomal subunit"/>
    <property type="evidence" value="ECO:0007669"/>
    <property type="project" value="TreeGrafter"/>
</dbReference>
<dbReference type="GO" id="GO:0070180">
    <property type="term" value="F:large ribosomal subunit rRNA binding"/>
    <property type="evidence" value="ECO:0007669"/>
    <property type="project" value="UniProtKB-UniRule"/>
</dbReference>
<dbReference type="GO" id="GO:0003735">
    <property type="term" value="F:structural constituent of ribosome"/>
    <property type="evidence" value="ECO:0007669"/>
    <property type="project" value="InterPro"/>
</dbReference>
<dbReference type="GO" id="GO:0006412">
    <property type="term" value="P:translation"/>
    <property type="evidence" value="ECO:0007669"/>
    <property type="project" value="UniProtKB-UniRule"/>
</dbReference>
<dbReference type="CDD" id="cd00349">
    <property type="entry name" value="Ribosomal_L11"/>
    <property type="match status" value="1"/>
</dbReference>
<dbReference type="FunFam" id="1.10.10.250:FF:000001">
    <property type="entry name" value="50S ribosomal protein L11"/>
    <property type="match status" value="1"/>
</dbReference>
<dbReference type="FunFam" id="3.30.1550.10:FF:000001">
    <property type="entry name" value="50S ribosomal protein L11"/>
    <property type="match status" value="1"/>
</dbReference>
<dbReference type="Gene3D" id="1.10.10.250">
    <property type="entry name" value="Ribosomal protein L11, C-terminal domain"/>
    <property type="match status" value="1"/>
</dbReference>
<dbReference type="Gene3D" id="3.30.1550.10">
    <property type="entry name" value="Ribosomal protein L11/L12, N-terminal domain"/>
    <property type="match status" value="1"/>
</dbReference>
<dbReference type="HAMAP" id="MF_00736">
    <property type="entry name" value="Ribosomal_uL11"/>
    <property type="match status" value="1"/>
</dbReference>
<dbReference type="InterPro" id="IPR000911">
    <property type="entry name" value="Ribosomal_uL11"/>
</dbReference>
<dbReference type="InterPro" id="IPR006519">
    <property type="entry name" value="Ribosomal_uL11_bac-typ"/>
</dbReference>
<dbReference type="InterPro" id="IPR020783">
    <property type="entry name" value="Ribosomal_uL11_C"/>
</dbReference>
<dbReference type="InterPro" id="IPR036769">
    <property type="entry name" value="Ribosomal_uL11_C_sf"/>
</dbReference>
<dbReference type="InterPro" id="IPR020785">
    <property type="entry name" value="Ribosomal_uL11_CS"/>
</dbReference>
<dbReference type="InterPro" id="IPR020784">
    <property type="entry name" value="Ribosomal_uL11_N"/>
</dbReference>
<dbReference type="InterPro" id="IPR036796">
    <property type="entry name" value="Ribosomal_uL11_N_sf"/>
</dbReference>
<dbReference type="NCBIfam" id="TIGR01632">
    <property type="entry name" value="L11_bact"/>
    <property type="match status" value="1"/>
</dbReference>
<dbReference type="PANTHER" id="PTHR11661">
    <property type="entry name" value="60S RIBOSOMAL PROTEIN L12"/>
    <property type="match status" value="1"/>
</dbReference>
<dbReference type="PANTHER" id="PTHR11661:SF1">
    <property type="entry name" value="LARGE RIBOSOMAL SUBUNIT PROTEIN UL11M"/>
    <property type="match status" value="1"/>
</dbReference>
<dbReference type="Pfam" id="PF00298">
    <property type="entry name" value="Ribosomal_L11"/>
    <property type="match status" value="1"/>
</dbReference>
<dbReference type="Pfam" id="PF03946">
    <property type="entry name" value="Ribosomal_L11_N"/>
    <property type="match status" value="1"/>
</dbReference>
<dbReference type="SMART" id="SM00649">
    <property type="entry name" value="RL11"/>
    <property type="match status" value="1"/>
</dbReference>
<dbReference type="SUPFAM" id="SSF54747">
    <property type="entry name" value="Ribosomal L11/L12e N-terminal domain"/>
    <property type="match status" value="1"/>
</dbReference>
<dbReference type="SUPFAM" id="SSF46906">
    <property type="entry name" value="Ribosomal protein L11, C-terminal domain"/>
    <property type="match status" value="1"/>
</dbReference>
<dbReference type="PROSITE" id="PS00359">
    <property type="entry name" value="RIBOSOMAL_L11"/>
    <property type="match status" value="1"/>
</dbReference>
<reference key="1">
    <citation type="journal article" date="2008" name="Antimicrob. Agents Chemother.">
        <title>Whole-genome pyrosequencing of an epidemic multidrug-resistant Acinetobacter baumannii strain belonging to the European clone II group.</title>
        <authorList>
            <person name="Iacono M."/>
            <person name="Villa L."/>
            <person name="Fortini D."/>
            <person name="Bordoni R."/>
            <person name="Imperi F."/>
            <person name="Bonnal R.J."/>
            <person name="Sicheritz-Ponten T."/>
            <person name="De Bellis G."/>
            <person name="Visca P."/>
            <person name="Cassone A."/>
            <person name="Carattoli A."/>
        </authorList>
    </citation>
    <scope>NUCLEOTIDE SEQUENCE [LARGE SCALE GENOMIC DNA]</scope>
    <source>
        <strain>ACICU</strain>
    </source>
</reference>
<comment type="function">
    <text evidence="1">Forms part of the ribosomal stalk which helps the ribosome interact with GTP-bound translation factors.</text>
</comment>
<comment type="subunit">
    <text evidence="1">Part of the ribosomal stalk of the 50S ribosomal subunit. Interacts with L10 and the large rRNA to form the base of the stalk. L10 forms an elongated spine to which L12 dimers bind in a sequential fashion forming a multimeric L10(L12)X complex.</text>
</comment>
<comment type="PTM">
    <text evidence="1">One or more lysine residues are methylated.</text>
</comment>
<comment type="similarity">
    <text evidence="1">Belongs to the universal ribosomal protein uL11 family.</text>
</comment>
<sequence>MAKKIDGYIKLQVPAGKANPSPPIGPALGQRGVNIMAFCKEFNAATQKVEPGLPIPVVITVYNDKSFTFIMKTPPASILLKKAAGIQKGSSVPNKTKVGKLTRAQLEEIATTKEPDLTGADLDARVRTIAGSARSMGLEVEL</sequence>
<proteinExistence type="inferred from homology"/>